<reference key="1">
    <citation type="journal article" date="2008" name="PLoS ONE">
        <title>Genome sequence of Brucella abortus vaccine strain S19 compared to virulent strains yields candidate virulence genes.</title>
        <authorList>
            <person name="Crasta O.R."/>
            <person name="Folkerts O."/>
            <person name="Fei Z."/>
            <person name="Mane S.P."/>
            <person name="Evans C."/>
            <person name="Martino-Catt S."/>
            <person name="Bricker B."/>
            <person name="Yu G."/>
            <person name="Du L."/>
            <person name="Sobral B.W."/>
        </authorList>
    </citation>
    <scope>NUCLEOTIDE SEQUENCE [LARGE SCALE GENOMIC DNA]</scope>
    <source>
        <strain>S19</strain>
    </source>
</reference>
<protein>
    <recommendedName>
        <fullName evidence="1">Probable septum site-determining protein MinC</fullName>
    </recommendedName>
</protein>
<organism>
    <name type="scientific">Brucella abortus (strain S19)</name>
    <dbReference type="NCBI Taxonomy" id="430066"/>
    <lineage>
        <taxon>Bacteria</taxon>
        <taxon>Pseudomonadati</taxon>
        <taxon>Pseudomonadota</taxon>
        <taxon>Alphaproteobacteria</taxon>
        <taxon>Hyphomicrobiales</taxon>
        <taxon>Brucellaceae</taxon>
        <taxon>Brucella/Ochrobactrum group</taxon>
        <taxon>Brucella</taxon>
    </lineage>
</organism>
<feature type="chain" id="PRO_1000114268" description="Probable septum site-determining protein MinC">
    <location>
        <begin position="1"/>
        <end position="248"/>
    </location>
</feature>
<feature type="region of interest" description="Disordered" evidence="2">
    <location>
        <begin position="94"/>
        <end position="125"/>
    </location>
</feature>
<gene>
    <name evidence="1" type="primary">minC</name>
    <name type="ordered locus">BAbS19_II08160</name>
</gene>
<proteinExistence type="inferred from homology"/>
<name>MINC_BRUA1</name>
<evidence type="ECO:0000255" key="1">
    <source>
        <dbReference type="HAMAP-Rule" id="MF_00267"/>
    </source>
</evidence>
<evidence type="ECO:0000256" key="2">
    <source>
        <dbReference type="SAM" id="MobiDB-lite"/>
    </source>
</evidence>
<sequence length="248" mass="26589">MNQVLTETRPIRLKGRSFLAMVLSPELPLDGWLERLDDLARRSSGFFLGRPVVLDMENLAIERAQLVYLLQALNDRGVWIMGVEGARPSLLGPGMPPAMRGGQPAADFEAPAGEPQANPGAPEPQISQAVRAPGHAVHAMPSMVITEPVRSGQSVYFPEGDVTIVGSVASGAEVVAGGSIHIYGTLRGRALAGTAGNTSARIFCRKLEAELVAIDGLYKTAEDLEPRFRGQAVQLWLDGDYMMIDTLS</sequence>
<keyword id="KW-0131">Cell cycle</keyword>
<keyword id="KW-0132">Cell division</keyword>
<keyword id="KW-0717">Septation</keyword>
<accession>B2SBS2</accession>
<comment type="function">
    <text evidence="1">Cell division inhibitor that blocks the formation of polar Z ring septums. Rapidly oscillates between the poles of the cell to destabilize FtsZ filaments that have formed before they mature into polar Z rings. Prevents FtsZ polymerization.</text>
</comment>
<comment type="subunit">
    <text evidence="1">Interacts with MinD and FtsZ.</text>
</comment>
<comment type="similarity">
    <text evidence="1">Belongs to the MinC family.</text>
</comment>
<dbReference type="EMBL" id="CP000888">
    <property type="protein sequence ID" value="ACD74309.1"/>
    <property type="molecule type" value="Genomic_DNA"/>
</dbReference>
<dbReference type="RefSeq" id="WP_002966269.1">
    <property type="nucleotide sequence ID" value="NC_010740.1"/>
</dbReference>
<dbReference type="SMR" id="B2SBS2"/>
<dbReference type="GeneID" id="97535516"/>
<dbReference type="KEGG" id="bmc:BAbS19_II08160"/>
<dbReference type="HOGENOM" id="CLU_067812_1_0_5"/>
<dbReference type="Proteomes" id="UP000002565">
    <property type="component" value="Chromosome 2"/>
</dbReference>
<dbReference type="GO" id="GO:0000902">
    <property type="term" value="P:cell morphogenesis"/>
    <property type="evidence" value="ECO:0007669"/>
    <property type="project" value="InterPro"/>
</dbReference>
<dbReference type="GO" id="GO:0000917">
    <property type="term" value="P:division septum assembly"/>
    <property type="evidence" value="ECO:0007669"/>
    <property type="project" value="UniProtKB-KW"/>
</dbReference>
<dbReference type="GO" id="GO:1901891">
    <property type="term" value="P:regulation of cell septum assembly"/>
    <property type="evidence" value="ECO:0007669"/>
    <property type="project" value="InterPro"/>
</dbReference>
<dbReference type="Gene3D" id="2.160.20.70">
    <property type="match status" value="1"/>
</dbReference>
<dbReference type="Gene3D" id="3.30.70.260">
    <property type="match status" value="1"/>
</dbReference>
<dbReference type="HAMAP" id="MF_00267">
    <property type="entry name" value="MinC"/>
    <property type="match status" value="1"/>
</dbReference>
<dbReference type="InterPro" id="IPR016098">
    <property type="entry name" value="CAP/MinC_C"/>
</dbReference>
<dbReference type="InterPro" id="IPR013033">
    <property type="entry name" value="MinC"/>
</dbReference>
<dbReference type="InterPro" id="IPR036145">
    <property type="entry name" value="MinC_C_sf"/>
</dbReference>
<dbReference type="InterPro" id="IPR005526">
    <property type="entry name" value="Septum_form_inhib_MinC_C"/>
</dbReference>
<dbReference type="NCBIfam" id="TIGR01222">
    <property type="entry name" value="minC"/>
    <property type="match status" value="1"/>
</dbReference>
<dbReference type="PANTHER" id="PTHR34108">
    <property type="entry name" value="SEPTUM SITE-DETERMINING PROTEIN MINC"/>
    <property type="match status" value="1"/>
</dbReference>
<dbReference type="PANTHER" id="PTHR34108:SF1">
    <property type="entry name" value="SEPTUM SITE-DETERMINING PROTEIN MINC"/>
    <property type="match status" value="1"/>
</dbReference>
<dbReference type="Pfam" id="PF03775">
    <property type="entry name" value="MinC_C"/>
    <property type="match status" value="1"/>
</dbReference>
<dbReference type="SUPFAM" id="SSF63848">
    <property type="entry name" value="Cell-division inhibitor MinC, C-terminal domain"/>
    <property type="match status" value="1"/>
</dbReference>